<reference key="1">
    <citation type="journal article" date="2005" name="Glycobiology">
        <title>The animal sialyltransferases and sialyltransferase-related genes: a phylogenetic approach.</title>
        <authorList>
            <person name="Harduin-Lepers A."/>
            <person name="Mollicone R."/>
            <person name="Delannoy P."/>
            <person name="Oriol R."/>
        </authorList>
    </citation>
    <scope>NUCLEOTIDE SEQUENCE [MRNA]</scope>
</reference>
<feature type="chain" id="PRO_0000314787" description="Beta-galactoside alpha-2,6-sialyltransferase 2">
    <location>
        <begin position="1"/>
        <end position="529"/>
    </location>
</feature>
<feature type="topological domain" description="Cytoplasmic" evidence="3">
    <location>
        <begin position="1"/>
        <end position="11"/>
    </location>
</feature>
<feature type="transmembrane region" description="Helical; Signal-anchor for type II membrane protein" evidence="3">
    <location>
        <begin position="12"/>
        <end position="32"/>
    </location>
</feature>
<feature type="topological domain" description="Lumenal" evidence="3">
    <location>
        <begin position="33"/>
        <end position="529"/>
    </location>
</feature>
<feature type="region of interest" description="Disordered" evidence="4">
    <location>
        <begin position="142"/>
        <end position="186"/>
    </location>
</feature>
<feature type="compositionally biased region" description="Basic residues" evidence="4">
    <location>
        <begin position="169"/>
        <end position="183"/>
    </location>
</feature>
<feature type="glycosylation site" description="N-linked (GlcNAc...) asparagine" evidence="3">
    <location>
        <position position="211"/>
    </location>
</feature>
<feature type="disulfide bond" evidence="1">
    <location>
        <begin position="253"/>
        <end position="519"/>
    </location>
</feature>
<feature type="disulfide bond" evidence="1">
    <location>
        <begin position="296"/>
        <end position="448"/>
    </location>
</feature>
<feature type="disulfide bond" evidence="1">
    <location>
        <begin position="466"/>
        <end position="477"/>
    </location>
</feature>
<dbReference type="EC" id="2.4.3.1" evidence="2"/>
<dbReference type="EMBL" id="AJ627625">
    <property type="protein sequence ID" value="CAF29493.1"/>
    <property type="molecule type" value="mRNA"/>
</dbReference>
<dbReference type="RefSeq" id="NP_001181861.1">
    <property type="nucleotide sequence ID" value="NM_001194932.1"/>
</dbReference>
<dbReference type="SMR" id="Q701R4"/>
<dbReference type="STRING" id="9598.ENSPTRP00000040768"/>
<dbReference type="CAZy" id="GT29">
    <property type="family name" value="Glycosyltransferase Family 29"/>
</dbReference>
<dbReference type="GlyCosmos" id="Q701R4">
    <property type="glycosylation" value="1 site, No reported glycans"/>
</dbReference>
<dbReference type="PaxDb" id="9598-ENSPTRP00000040768"/>
<dbReference type="GeneID" id="450198"/>
<dbReference type="CTD" id="84620"/>
<dbReference type="eggNOG" id="KOG2692">
    <property type="taxonomic scope" value="Eukaryota"/>
</dbReference>
<dbReference type="InParanoid" id="Q701R4"/>
<dbReference type="BRENDA" id="2.4.99.1">
    <property type="organism ID" value="4497"/>
</dbReference>
<dbReference type="Proteomes" id="UP000002277">
    <property type="component" value="Unplaced"/>
</dbReference>
<dbReference type="GO" id="GO:0005794">
    <property type="term" value="C:Golgi apparatus"/>
    <property type="evidence" value="ECO:0000318"/>
    <property type="project" value="GO_Central"/>
</dbReference>
<dbReference type="GO" id="GO:0032580">
    <property type="term" value="C:Golgi cisterna membrane"/>
    <property type="evidence" value="ECO:0007669"/>
    <property type="project" value="UniProtKB-SubCell"/>
</dbReference>
<dbReference type="GO" id="GO:0003835">
    <property type="term" value="F:beta-galactoside alpha-2,6-sialyltransferase activity"/>
    <property type="evidence" value="ECO:0000250"/>
    <property type="project" value="UniProtKB"/>
</dbReference>
<dbReference type="GO" id="GO:0009311">
    <property type="term" value="P:oligosaccharide metabolic process"/>
    <property type="evidence" value="ECO:0000250"/>
    <property type="project" value="UniProtKB"/>
</dbReference>
<dbReference type="GO" id="GO:0006486">
    <property type="term" value="P:protein glycosylation"/>
    <property type="evidence" value="ECO:0007669"/>
    <property type="project" value="InterPro"/>
</dbReference>
<dbReference type="GO" id="GO:0097503">
    <property type="term" value="P:sialylation"/>
    <property type="evidence" value="ECO:0000318"/>
    <property type="project" value="GO_Central"/>
</dbReference>
<dbReference type="CDD" id="cd23986">
    <property type="entry name" value="GT29_ST6GAL2"/>
    <property type="match status" value="1"/>
</dbReference>
<dbReference type="FunFam" id="3.90.1480.20:FF:000010">
    <property type="entry name" value="ST6 beta-galactoside alpha-2,6-sialyltransferase 2"/>
    <property type="match status" value="1"/>
</dbReference>
<dbReference type="Gene3D" id="3.90.1480.20">
    <property type="entry name" value="Glycosyl transferase family 29"/>
    <property type="match status" value="1"/>
</dbReference>
<dbReference type="InterPro" id="IPR011330">
    <property type="entry name" value="Glyco_hydro/deAcase_b/a-brl"/>
</dbReference>
<dbReference type="InterPro" id="IPR001675">
    <property type="entry name" value="Glyco_trans_29"/>
</dbReference>
<dbReference type="InterPro" id="IPR038578">
    <property type="entry name" value="GT29-like_sf"/>
</dbReference>
<dbReference type="PANTHER" id="PTHR46059">
    <property type="entry name" value="BETA-GALACTOSIDE ALPHA-2,6-SIALYLTRANSFERASE"/>
    <property type="match status" value="1"/>
</dbReference>
<dbReference type="PANTHER" id="PTHR46059:SF3">
    <property type="entry name" value="BETA-GALACTOSIDE ALPHA-2,6-SIALYLTRANSFERASE 2"/>
    <property type="match status" value="1"/>
</dbReference>
<dbReference type="Pfam" id="PF00777">
    <property type="entry name" value="Glyco_transf_29"/>
    <property type="match status" value="1"/>
</dbReference>
<dbReference type="SUPFAM" id="SSF88713">
    <property type="entry name" value="Glycoside hydrolase/deacetylase"/>
    <property type="match status" value="1"/>
</dbReference>
<comment type="function">
    <text evidence="2">Transfers sialic acid from the donor of substrate CMP-sialic acid to galactose containing acceptor substrates. Has alpha-2,6-sialyltransferase activity toward oligosaccharides that have the Gal-beta-1,4-GlcNAc sequence at the non-reducing end of their carbohydrate groups, but it has weak or no activities toward glycoproteins and glycolipids.</text>
</comment>
<comment type="catalytic activity">
    <reaction evidence="2">
        <text>a beta-D-galactoside + CMP-N-acetyl-beta-neuraminate = an N-acetyl-alpha-neuraminyl-(2-&gt;6)-beta-D-galactosyl derivative + CMP + H(+)</text>
        <dbReference type="Rhea" id="RHEA:52104"/>
        <dbReference type="ChEBI" id="CHEBI:15378"/>
        <dbReference type="ChEBI" id="CHEBI:28034"/>
        <dbReference type="ChEBI" id="CHEBI:57812"/>
        <dbReference type="ChEBI" id="CHEBI:60377"/>
        <dbReference type="ChEBI" id="CHEBI:136398"/>
        <dbReference type="EC" id="2.4.3.1"/>
    </reaction>
</comment>
<comment type="subcellular location">
    <subcellularLocation>
        <location evidence="1">Golgi apparatus</location>
        <location evidence="1">Golgi stack membrane</location>
        <topology evidence="1">Single-pass type II membrane protein</topology>
    </subcellularLocation>
</comment>
<comment type="similarity">
    <text evidence="5">Belongs to the glycosyltransferase 29 family.</text>
</comment>
<proteinExistence type="evidence at transcript level"/>
<gene>
    <name type="primary">ST6GAL2</name>
</gene>
<accession>Q701R4</accession>
<name>SIAT2_PANTR</name>
<sequence>MKPHLKQWRQRMLFGLFAGGLLFLLIFIYFTDSNPAEPVPSSLSFLETRRLLPVQGKQRAIMGAAHEPSPPGGLDARQALPRAHPAGSFHAGPGDLQKWAQSQDGFEHKEFFSSQVGRKSQSAFYPEDDDYFFAAGQPGWHSHSQGTLGFPSPGEPGPREGAFPAAQVQRRRVKKRHRRQRRSHVLEEGDDGDRLYSSMSRAFLYRLWKGNVSSKMLNPRLQKAMKDYLTANKHGVRFRGKREAGLSRAQLLCQLRSRARVRTLDGTEAPFSALGWRRLVPAVPLSQLHPRGLRSCAVVMSAGAILNSSLGEEIDSHDAVLRFNSAPTRGYEKDVGNKTTVRIINSQILTNPSHHFVDSSLYKDVILVAWDPAPYSANLNLWYKKPDYNLFTPYIQHRQRNPNQPFYILHPKFIWQLWDIIQENTKEKIQPNPPSSGFIGILIMMSMCREVHVYEYIPSVRQTELCHYHELYYDAACTLGAYHPLLYEKLLVQRLNTGTQGDLHRKGKVVLPGFQAVHCPAPSPVIPHS</sequence>
<organism>
    <name type="scientific">Pan troglodytes</name>
    <name type="common">Chimpanzee</name>
    <dbReference type="NCBI Taxonomy" id="9598"/>
    <lineage>
        <taxon>Eukaryota</taxon>
        <taxon>Metazoa</taxon>
        <taxon>Chordata</taxon>
        <taxon>Craniata</taxon>
        <taxon>Vertebrata</taxon>
        <taxon>Euteleostomi</taxon>
        <taxon>Mammalia</taxon>
        <taxon>Eutheria</taxon>
        <taxon>Euarchontoglires</taxon>
        <taxon>Primates</taxon>
        <taxon>Haplorrhini</taxon>
        <taxon>Catarrhini</taxon>
        <taxon>Hominidae</taxon>
        <taxon>Pan</taxon>
    </lineage>
</organism>
<protein>
    <recommendedName>
        <fullName>Beta-galactoside alpha-2,6-sialyltransferase 2</fullName>
        <shortName>Alpha 2,6-ST 2</shortName>
        <ecNumber evidence="2">2.4.3.1</ecNumber>
    </recommendedName>
    <alternativeName>
        <fullName>CMP-N-acetylneuraminate-beta-galactosamide-alpha-2,6-sialyltransferase 2</fullName>
    </alternativeName>
    <alternativeName>
        <fullName>ST6Gal II</fullName>
        <shortName>ST6GalII</shortName>
    </alternativeName>
    <alternativeName>
        <fullName>Sialyltransferase 2</fullName>
    </alternativeName>
</protein>
<evidence type="ECO:0000250" key="1"/>
<evidence type="ECO:0000250" key="2">
    <source>
        <dbReference type="UniProtKB" id="Q96JF0"/>
    </source>
</evidence>
<evidence type="ECO:0000255" key="3"/>
<evidence type="ECO:0000256" key="4">
    <source>
        <dbReference type="SAM" id="MobiDB-lite"/>
    </source>
</evidence>
<evidence type="ECO:0000305" key="5"/>
<keyword id="KW-1015">Disulfide bond</keyword>
<keyword id="KW-0325">Glycoprotein</keyword>
<keyword id="KW-0328">Glycosyltransferase</keyword>
<keyword id="KW-0333">Golgi apparatus</keyword>
<keyword id="KW-0472">Membrane</keyword>
<keyword id="KW-1185">Reference proteome</keyword>
<keyword id="KW-0735">Signal-anchor</keyword>
<keyword id="KW-0808">Transferase</keyword>
<keyword id="KW-0812">Transmembrane</keyword>
<keyword id="KW-1133">Transmembrane helix</keyword>